<evidence type="ECO:0000255" key="1">
    <source>
        <dbReference type="PROSITE-ProRule" id="PRU01182"/>
    </source>
</evidence>
<evidence type="ECO:0000256" key="2">
    <source>
        <dbReference type="SAM" id="MobiDB-lite"/>
    </source>
</evidence>
<evidence type="ECO:0000305" key="3"/>
<sequence length="278" mass="29394">MQYEIVSAGEDVDDERARGRRAAAPAAPSSAVPSSAALSSAALSSAAQPTGAPPATAAARRGRDLPRERLLARGPAALSDAELVALLLGSGLPGHDVFALAHTLLARFGSLRALLDAAPDDFKGLRGIGPARTAILVAVVELARRALAEKARERPLVDSPGAVDDYLRLLIGTRPREVFVCLFLDARHRLVQTEETAHGSLTRMAVYPREIVRRALALNAAALIVAHNHPSGAVRPSAADRRLTRVLRDALALVDIKLIDHFVVGASDTFSFAQAGWI</sequence>
<comment type="similarity">
    <text evidence="3">Belongs to the UPF0758 family.</text>
</comment>
<accession>A3NSE4</accession>
<gene>
    <name type="ordered locus">BURPS1106A_0984</name>
</gene>
<reference key="1">
    <citation type="journal article" date="2010" name="Genome Biol. Evol.">
        <title>Continuing evolution of Burkholderia mallei through genome reduction and large-scale rearrangements.</title>
        <authorList>
            <person name="Losada L."/>
            <person name="Ronning C.M."/>
            <person name="DeShazer D."/>
            <person name="Woods D."/>
            <person name="Fedorova N."/>
            <person name="Kim H.S."/>
            <person name="Shabalina S.A."/>
            <person name="Pearson T.R."/>
            <person name="Brinkac L."/>
            <person name="Tan P."/>
            <person name="Nandi T."/>
            <person name="Crabtree J."/>
            <person name="Badger J."/>
            <person name="Beckstrom-Sternberg S."/>
            <person name="Saqib M."/>
            <person name="Schutzer S.E."/>
            <person name="Keim P."/>
            <person name="Nierman W.C."/>
        </authorList>
    </citation>
    <scope>NUCLEOTIDE SEQUENCE [LARGE SCALE GENOMIC DNA]</scope>
    <source>
        <strain>1106a</strain>
    </source>
</reference>
<dbReference type="EMBL" id="CP000572">
    <property type="protein sequence ID" value="ABN92212.1"/>
    <property type="molecule type" value="Genomic_DNA"/>
</dbReference>
<dbReference type="SMR" id="A3NSE4"/>
<dbReference type="KEGG" id="bpl:BURPS1106A_0984"/>
<dbReference type="HOGENOM" id="CLU_073529_0_1_4"/>
<dbReference type="Proteomes" id="UP000006738">
    <property type="component" value="Chromosome I"/>
</dbReference>
<dbReference type="GO" id="GO:0046872">
    <property type="term" value="F:metal ion binding"/>
    <property type="evidence" value="ECO:0007669"/>
    <property type="project" value="UniProtKB-KW"/>
</dbReference>
<dbReference type="GO" id="GO:0008237">
    <property type="term" value="F:metallopeptidase activity"/>
    <property type="evidence" value="ECO:0007669"/>
    <property type="project" value="UniProtKB-KW"/>
</dbReference>
<dbReference type="GO" id="GO:0006508">
    <property type="term" value="P:proteolysis"/>
    <property type="evidence" value="ECO:0007669"/>
    <property type="project" value="UniProtKB-KW"/>
</dbReference>
<dbReference type="CDD" id="cd08071">
    <property type="entry name" value="MPN_DUF2466"/>
    <property type="match status" value="1"/>
</dbReference>
<dbReference type="Gene3D" id="1.10.150.20">
    <property type="entry name" value="5' to 3' exonuclease, C-terminal subdomain"/>
    <property type="match status" value="1"/>
</dbReference>
<dbReference type="Gene3D" id="3.40.140.10">
    <property type="entry name" value="Cytidine Deaminase, domain 2"/>
    <property type="match status" value="1"/>
</dbReference>
<dbReference type="InterPro" id="IPR037518">
    <property type="entry name" value="MPN"/>
</dbReference>
<dbReference type="InterPro" id="IPR025657">
    <property type="entry name" value="RadC_JAB"/>
</dbReference>
<dbReference type="InterPro" id="IPR010994">
    <property type="entry name" value="RuvA_2-like"/>
</dbReference>
<dbReference type="InterPro" id="IPR001405">
    <property type="entry name" value="UPF0758"/>
</dbReference>
<dbReference type="InterPro" id="IPR020891">
    <property type="entry name" value="UPF0758_CS"/>
</dbReference>
<dbReference type="InterPro" id="IPR046778">
    <property type="entry name" value="UPF0758_N"/>
</dbReference>
<dbReference type="NCBIfam" id="NF000642">
    <property type="entry name" value="PRK00024.1"/>
    <property type="match status" value="1"/>
</dbReference>
<dbReference type="NCBIfam" id="TIGR00608">
    <property type="entry name" value="radc"/>
    <property type="match status" value="1"/>
</dbReference>
<dbReference type="PANTHER" id="PTHR30471">
    <property type="entry name" value="DNA REPAIR PROTEIN RADC"/>
    <property type="match status" value="1"/>
</dbReference>
<dbReference type="PANTHER" id="PTHR30471:SF3">
    <property type="entry name" value="UPF0758 PROTEIN YEES-RELATED"/>
    <property type="match status" value="1"/>
</dbReference>
<dbReference type="Pfam" id="PF04002">
    <property type="entry name" value="RadC"/>
    <property type="match status" value="1"/>
</dbReference>
<dbReference type="Pfam" id="PF20582">
    <property type="entry name" value="UPF0758_N"/>
    <property type="match status" value="1"/>
</dbReference>
<dbReference type="SUPFAM" id="SSF102712">
    <property type="entry name" value="JAB1/MPN domain"/>
    <property type="match status" value="1"/>
</dbReference>
<dbReference type="SUPFAM" id="SSF47781">
    <property type="entry name" value="RuvA domain 2-like"/>
    <property type="match status" value="1"/>
</dbReference>
<dbReference type="PROSITE" id="PS50249">
    <property type="entry name" value="MPN"/>
    <property type="match status" value="1"/>
</dbReference>
<dbReference type="PROSITE" id="PS01302">
    <property type="entry name" value="UPF0758"/>
    <property type="match status" value="1"/>
</dbReference>
<name>Y984_BURP0</name>
<keyword id="KW-0378">Hydrolase</keyword>
<keyword id="KW-0479">Metal-binding</keyword>
<keyword id="KW-0482">Metalloprotease</keyword>
<keyword id="KW-0645">Protease</keyword>
<keyword id="KW-0862">Zinc</keyword>
<organism>
    <name type="scientific">Burkholderia pseudomallei (strain 1106a)</name>
    <dbReference type="NCBI Taxonomy" id="357348"/>
    <lineage>
        <taxon>Bacteria</taxon>
        <taxon>Pseudomonadati</taxon>
        <taxon>Pseudomonadota</taxon>
        <taxon>Betaproteobacteria</taxon>
        <taxon>Burkholderiales</taxon>
        <taxon>Burkholderiaceae</taxon>
        <taxon>Burkholderia</taxon>
        <taxon>pseudomallei group</taxon>
    </lineage>
</organism>
<feature type="chain" id="PRO_0000322675" description="UPF0758 protein BURPS1106A_0984">
    <location>
        <begin position="1"/>
        <end position="278"/>
    </location>
</feature>
<feature type="domain" description="MPN" evidence="1">
    <location>
        <begin position="156"/>
        <end position="278"/>
    </location>
</feature>
<feature type="region of interest" description="Disordered" evidence="2">
    <location>
        <begin position="1"/>
        <end position="64"/>
    </location>
</feature>
<feature type="short sequence motif" description="JAMM motif" evidence="1">
    <location>
        <begin position="227"/>
        <end position="240"/>
    </location>
</feature>
<feature type="compositionally biased region" description="Low complexity" evidence="2">
    <location>
        <begin position="22"/>
        <end position="59"/>
    </location>
</feature>
<feature type="binding site" evidence="1">
    <location>
        <position position="227"/>
    </location>
    <ligand>
        <name>Zn(2+)</name>
        <dbReference type="ChEBI" id="CHEBI:29105"/>
        <note>catalytic</note>
    </ligand>
</feature>
<feature type="binding site" evidence="1">
    <location>
        <position position="229"/>
    </location>
    <ligand>
        <name>Zn(2+)</name>
        <dbReference type="ChEBI" id="CHEBI:29105"/>
        <note>catalytic</note>
    </ligand>
</feature>
<feature type="binding site" evidence="1">
    <location>
        <position position="240"/>
    </location>
    <ligand>
        <name>Zn(2+)</name>
        <dbReference type="ChEBI" id="CHEBI:29105"/>
        <note>catalytic</note>
    </ligand>
</feature>
<protein>
    <recommendedName>
        <fullName>UPF0758 protein BURPS1106A_0984</fullName>
    </recommendedName>
</protein>
<proteinExistence type="inferred from homology"/>